<keyword id="KW-0012">Acyltransferase</keyword>
<keyword id="KW-0963">Cytoplasm</keyword>
<keyword id="KW-0276">Fatty acid metabolism</keyword>
<keyword id="KW-0442">Lipid degradation</keyword>
<keyword id="KW-0443">Lipid metabolism</keyword>
<keyword id="KW-0808">Transferase</keyword>
<name>FADI_SALCH</name>
<proteinExistence type="inferred from homology"/>
<sequence>MRQALPLVTRQGDRIAIVSGLRTPFARQATAFHGIPAVDLGKMVVGELLARSEIPADAIEQLVFGQVVQMPEAPNIAREIVLGTGMNVHTDAYSVSRACATSFQAVANVAESLMAGTIRAGIAGGADSSSVLPIGVSKALARVLVDVNKARTTRQRLTLFSRLRLRDLLPVPPAVAEYSTGLRMGDTAEQMAKTYGITREQQDALAHRSHQRAAQAWAEGKLAEEVMTTYVPPYKNPFTEDNNIRGTSTLADYAKLRPAFDRKHGSVTAANSTPLTDGAAAVILMTESRAKELGLRPLGYLRSYAFTAIDVWQDMLLGPAWSTPLALERAGLTMADLTLFDMHEAFAAQTLANLQLLGSERFAREVLGRAQATGEVDDAKFNVLGGSIAYGHPFAATGARMITQTLHELRRRGGGFGLVTACAAGGLGAAMVLEAE</sequence>
<evidence type="ECO:0000255" key="1">
    <source>
        <dbReference type="HAMAP-Rule" id="MF_01618"/>
    </source>
</evidence>
<accession>Q57LW5</accession>
<organism>
    <name type="scientific">Salmonella choleraesuis (strain SC-B67)</name>
    <dbReference type="NCBI Taxonomy" id="321314"/>
    <lineage>
        <taxon>Bacteria</taxon>
        <taxon>Pseudomonadati</taxon>
        <taxon>Pseudomonadota</taxon>
        <taxon>Gammaproteobacteria</taxon>
        <taxon>Enterobacterales</taxon>
        <taxon>Enterobacteriaceae</taxon>
        <taxon>Salmonella</taxon>
    </lineage>
</organism>
<dbReference type="EC" id="2.3.1.16" evidence="1"/>
<dbReference type="EMBL" id="AE017220">
    <property type="protein sequence ID" value="AAX66297.1"/>
    <property type="molecule type" value="Genomic_DNA"/>
</dbReference>
<dbReference type="RefSeq" id="WP_001540548.1">
    <property type="nucleotide sequence ID" value="NC_006905.1"/>
</dbReference>
<dbReference type="SMR" id="Q57LW5"/>
<dbReference type="KEGG" id="sec:SCH_2391"/>
<dbReference type="HOGENOM" id="CLU_031026_2_0_6"/>
<dbReference type="UniPathway" id="UPA00659"/>
<dbReference type="Proteomes" id="UP000000538">
    <property type="component" value="Chromosome"/>
</dbReference>
<dbReference type="GO" id="GO:0005829">
    <property type="term" value="C:cytosol"/>
    <property type="evidence" value="ECO:0007669"/>
    <property type="project" value="TreeGrafter"/>
</dbReference>
<dbReference type="GO" id="GO:0003988">
    <property type="term" value="F:acetyl-CoA C-acyltransferase activity"/>
    <property type="evidence" value="ECO:0007669"/>
    <property type="project" value="UniProtKB-UniRule"/>
</dbReference>
<dbReference type="GO" id="GO:0006635">
    <property type="term" value="P:fatty acid beta-oxidation"/>
    <property type="evidence" value="ECO:0007669"/>
    <property type="project" value="UniProtKB-UniRule"/>
</dbReference>
<dbReference type="CDD" id="cd00751">
    <property type="entry name" value="thiolase"/>
    <property type="match status" value="1"/>
</dbReference>
<dbReference type="FunFam" id="3.40.47.10:FF:000011">
    <property type="entry name" value="3-ketoacyl-CoA thiolase"/>
    <property type="match status" value="1"/>
</dbReference>
<dbReference type="Gene3D" id="3.40.47.10">
    <property type="match status" value="1"/>
</dbReference>
<dbReference type="HAMAP" id="MF_01618">
    <property type="entry name" value="FadI"/>
    <property type="match status" value="1"/>
</dbReference>
<dbReference type="InterPro" id="IPR012806">
    <property type="entry name" value="Ac-CoA_C-AcTrfase_FadI"/>
</dbReference>
<dbReference type="InterPro" id="IPR002155">
    <property type="entry name" value="Thiolase"/>
</dbReference>
<dbReference type="InterPro" id="IPR016039">
    <property type="entry name" value="Thiolase-like"/>
</dbReference>
<dbReference type="InterPro" id="IPR020615">
    <property type="entry name" value="Thiolase_acyl_enz_int_AS"/>
</dbReference>
<dbReference type="InterPro" id="IPR020610">
    <property type="entry name" value="Thiolase_AS"/>
</dbReference>
<dbReference type="InterPro" id="IPR020617">
    <property type="entry name" value="Thiolase_C"/>
</dbReference>
<dbReference type="InterPro" id="IPR020613">
    <property type="entry name" value="Thiolase_CS"/>
</dbReference>
<dbReference type="InterPro" id="IPR020616">
    <property type="entry name" value="Thiolase_N"/>
</dbReference>
<dbReference type="NCBIfam" id="TIGR01930">
    <property type="entry name" value="AcCoA-C-Actrans"/>
    <property type="match status" value="1"/>
</dbReference>
<dbReference type="NCBIfam" id="TIGR02446">
    <property type="entry name" value="FadI"/>
    <property type="match status" value="1"/>
</dbReference>
<dbReference type="NCBIfam" id="NF006516">
    <property type="entry name" value="PRK08963.1"/>
    <property type="match status" value="1"/>
</dbReference>
<dbReference type="PANTHER" id="PTHR18919:SF107">
    <property type="entry name" value="ACETYL-COA ACETYLTRANSFERASE, CYTOSOLIC"/>
    <property type="match status" value="1"/>
</dbReference>
<dbReference type="PANTHER" id="PTHR18919">
    <property type="entry name" value="ACETYL-COA C-ACYLTRANSFERASE"/>
    <property type="match status" value="1"/>
</dbReference>
<dbReference type="Pfam" id="PF02803">
    <property type="entry name" value="Thiolase_C"/>
    <property type="match status" value="1"/>
</dbReference>
<dbReference type="Pfam" id="PF00108">
    <property type="entry name" value="Thiolase_N"/>
    <property type="match status" value="1"/>
</dbReference>
<dbReference type="PIRSF" id="PIRSF000429">
    <property type="entry name" value="Ac-CoA_Ac_transf"/>
    <property type="match status" value="1"/>
</dbReference>
<dbReference type="SUPFAM" id="SSF53901">
    <property type="entry name" value="Thiolase-like"/>
    <property type="match status" value="2"/>
</dbReference>
<dbReference type="PROSITE" id="PS00098">
    <property type="entry name" value="THIOLASE_1"/>
    <property type="match status" value="1"/>
</dbReference>
<dbReference type="PROSITE" id="PS00737">
    <property type="entry name" value="THIOLASE_2"/>
    <property type="match status" value="1"/>
</dbReference>
<dbReference type="PROSITE" id="PS00099">
    <property type="entry name" value="THIOLASE_3"/>
    <property type="match status" value="1"/>
</dbReference>
<gene>
    <name evidence="1" type="primary">fadI</name>
    <name type="ordered locus">SCH_2391</name>
</gene>
<reference key="1">
    <citation type="journal article" date="2005" name="Nucleic Acids Res.">
        <title>The genome sequence of Salmonella enterica serovar Choleraesuis, a highly invasive and resistant zoonotic pathogen.</title>
        <authorList>
            <person name="Chiu C.-H."/>
            <person name="Tang P."/>
            <person name="Chu C."/>
            <person name="Hu S."/>
            <person name="Bao Q."/>
            <person name="Yu J."/>
            <person name="Chou Y.-Y."/>
            <person name="Wang H.-S."/>
            <person name="Lee Y.-S."/>
        </authorList>
    </citation>
    <scope>NUCLEOTIDE SEQUENCE [LARGE SCALE GENOMIC DNA]</scope>
    <source>
        <strain>SC-B67</strain>
    </source>
</reference>
<feature type="chain" id="PRO_0000206443" description="3-ketoacyl-CoA thiolase">
    <location>
        <begin position="1"/>
        <end position="436"/>
    </location>
</feature>
<feature type="active site" description="Acyl-thioester intermediate" evidence="1">
    <location>
        <position position="99"/>
    </location>
</feature>
<feature type="active site" description="Proton acceptor" evidence="1">
    <location>
        <position position="392"/>
    </location>
</feature>
<feature type="active site" description="Proton acceptor" evidence="1">
    <location>
        <position position="422"/>
    </location>
</feature>
<comment type="function">
    <text evidence="1">Catalyzes the final step of fatty acid oxidation in which acetyl-CoA is released and the CoA ester of a fatty acid two carbons shorter is formed.</text>
</comment>
<comment type="catalytic activity">
    <reaction evidence="1">
        <text>an acyl-CoA + acetyl-CoA = a 3-oxoacyl-CoA + CoA</text>
        <dbReference type="Rhea" id="RHEA:21564"/>
        <dbReference type="ChEBI" id="CHEBI:57287"/>
        <dbReference type="ChEBI" id="CHEBI:57288"/>
        <dbReference type="ChEBI" id="CHEBI:58342"/>
        <dbReference type="ChEBI" id="CHEBI:90726"/>
        <dbReference type="EC" id="2.3.1.16"/>
    </reaction>
</comment>
<comment type="pathway">
    <text evidence="1">Lipid metabolism; fatty acid beta-oxidation.</text>
</comment>
<comment type="subunit">
    <text evidence="1">Heterotetramer of two alpha chains (FadJ) and two beta chains (FadI).</text>
</comment>
<comment type="subcellular location">
    <subcellularLocation>
        <location evidence="1">Cytoplasm</location>
    </subcellularLocation>
</comment>
<comment type="similarity">
    <text evidence="1">Belongs to the thiolase-like superfamily. Thiolase family.</text>
</comment>
<protein>
    <recommendedName>
        <fullName evidence="1">3-ketoacyl-CoA thiolase</fullName>
        <ecNumber evidence="1">2.3.1.16</ecNumber>
    </recommendedName>
    <alternativeName>
        <fullName evidence="1">ACSs</fullName>
    </alternativeName>
    <alternativeName>
        <fullName evidence="1">Acetyl-CoA acyltransferase</fullName>
    </alternativeName>
    <alternativeName>
        <fullName evidence="1">Acyl-CoA ligase</fullName>
    </alternativeName>
    <alternativeName>
        <fullName evidence="1">Beta-ketothiolase</fullName>
    </alternativeName>
    <alternativeName>
        <fullName evidence="1">Fatty acid oxidation complex subunit beta</fullName>
    </alternativeName>
</protein>